<reference key="1">
    <citation type="journal article" date="1998" name="Science">
        <title>Genome sequence of the nematode C. elegans: a platform for investigating biology.</title>
        <authorList>
            <consortium name="The C. elegans sequencing consortium"/>
        </authorList>
    </citation>
    <scope>NUCLEOTIDE SEQUENCE [LARGE SCALE GENOMIC DNA]</scope>
    <source>
        <strain>Bristol N2</strain>
    </source>
</reference>
<comment type="domain">
    <text evidence="1">The protein kinase domain is predicted to be catalytically inactive.</text>
</comment>
<comment type="similarity">
    <text evidence="3">Belongs to the protein kinase superfamily. CK1 Ser/Thr protein kinase family.</text>
</comment>
<comment type="caution">
    <text evidence="3">Although it belongs to the protein kinase family, lacks the active site Asp residue which has been changed to Asn so is unlikely to be catalytically active.</text>
</comment>
<proteinExistence type="inferred from homology"/>
<sequence>MEDHVLKKLNANGPAPHIPNLNLYGKKMNFSYMVMTLLGRNLQDLESTNFVVNKGFSRGTWSRVGIQWVYALKYVHYNGFIHRNVNTQNLFLGNEKDSERAKIIHILDFGLGRPFARYHARENKWIVRIARHSAEFRGSFRYASPNVHLRKEQGRVDDVWSLPYVIIELNGGKALPWQTDYRRGRVEQMKLNLTPKDVMSDMPACMDKLMPHLASLNYYQRPDDHMIFKCFWQVMENEKITPSSKFDWENEEPDMSVPPAAWENPDGRYFQSNPLEINGPPTPAEVDFVL</sequence>
<gene>
    <name evidence="4" type="primary">ttbk-6</name>
    <name evidence="4" type="ORF">C45G9.1</name>
</gene>
<evidence type="ECO:0000255" key="1">
    <source>
        <dbReference type="PROSITE-ProRule" id="PRU00159"/>
    </source>
</evidence>
<evidence type="ECO:0000256" key="2">
    <source>
        <dbReference type="SAM" id="MobiDB-lite"/>
    </source>
</evidence>
<evidence type="ECO:0000305" key="3"/>
<evidence type="ECO:0000312" key="4">
    <source>
        <dbReference type="WormBase" id="C45G9.1"/>
    </source>
</evidence>
<keyword id="KW-1185">Reference proteome</keyword>
<accession>Q09503</accession>
<feature type="chain" id="PRO_0000086838" description="Inactive tau-tubulin kinase ttbk-6">
    <location>
        <begin position="1"/>
        <end position="290"/>
    </location>
</feature>
<feature type="domain" description="Protein kinase" evidence="1">
    <location>
        <begin position="1"/>
        <end position="240"/>
    </location>
</feature>
<feature type="region of interest" description="Disordered" evidence="2">
    <location>
        <begin position="244"/>
        <end position="263"/>
    </location>
</feature>
<feature type="region of interest" description="Disordered" evidence="2">
    <location>
        <begin position="268"/>
        <end position="290"/>
    </location>
</feature>
<organism>
    <name type="scientific">Caenorhabditis elegans</name>
    <dbReference type="NCBI Taxonomy" id="6239"/>
    <lineage>
        <taxon>Eukaryota</taxon>
        <taxon>Metazoa</taxon>
        <taxon>Ecdysozoa</taxon>
        <taxon>Nematoda</taxon>
        <taxon>Chromadorea</taxon>
        <taxon>Rhabditida</taxon>
        <taxon>Rhabditina</taxon>
        <taxon>Rhabditomorpha</taxon>
        <taxon>Rhabditoidea</taxon>
        <taxon>Rhabditidae</taxon>
        <taxon>Peloderinae</taxon>
        <taxon>Caenorhabditis</taxon>
    </lineage>
</organism>
<name>TTBK6_CAEEL</name>
<dbReference type="EMBL" id="BX284603">
    <property type="protein sequence ID" value="CCD67390.1"/>
    <property type="molecule type" value="Genomic_DNA"/>
</dbReference>
<dbReference type="PIR" id="C88449">
    <property type="entry name" value="C88449"/>
</dbReference>
<dbReference type="RefSeq" id="NP_498080.1">
    <property type="nucleotide sequence ID" value="NM_065679.1"/>
</dbReference>
<dbReference type="SMR" id="Q09503"/>
<dbReference type="FunCoup" id="Q09503">
    <property type="interactions" value="77"/>
</dbReference>
<dbReference type="STRING" id="6239.C45G9.1.1"/>
<dbReference type="PaxDb" id="6239-C45G9.1"/>
<dbReference type="EnsemblMetazoa" id="C45G9.1.1">
    <property type="protein sequence ID" value="C45G9.1.1"/>
    <property type="gene ID" value="WBGene00016673"/>
</dbReference>
<dbReference type="GeneID" id="183478"/>
<dbReference type="KEGG" id="cel:CELE_C45G9.1"/>
<dbReference type="UCSC" id="C45G9.1">
    <property type="organism name" value="c. elegans"/>
</dbReference>
<dbReference type="AGR" id="WB:WBGene00016673"/>
<dbReference type="CTD" id="183478"/>
<dbReference type="WormBase" id="C45G9.1">
    <property type="protein sequence ID" value="CE24851"/>
    <property type="gene ID" value="WBGene00016673"/>
    <property type="gene designation" value="ttbk-6"/>
</dbReference>
<dbReference type="eggNOG" id="KOG1164">
    <property type="taxonomic scope" value="Eukaryota"/>
</dbReference>
<dbReference type="GeneTree" id="ENSGT00970000196711"/>
<dbReference type="HOGENOM" id="CLU_019279_2_5_1"/>
<dbReference type="InParanoid" id="Q09503"/>
<dbReference type="OrthoDB" id="5979581at2759"/>
<dbReference type="PhylomeDB" id="Q09503"/>
<dbReference type="PRO" id="PR:Q09503"/>
<dbReference type="Proteomes" id="UP000001940">
    <property type="component" value="Chromosome III"/>
</dbReference>
<dbReference type="GO" id="GO:0005737">
    <property type="term" value="C:cytoplasm"/>
    <property type="evidence" value="ECO:0000318"/>
    <property type="project" value="GO_Central"/>
</dbReference>
<dbReference type="GO" id="GO:0005634">
    <property type="term" value="C:nucleus"/>
    <property type="evidence" value="ECO:0000318"/>
    <property type="project" value="GO_Central"/>
</dbReference>
<dbReference type="GO" id="GO:0005524">
    <property type="term" value="F:ATP binding"/>
    <property type="evidence" value="ECO:0007669"/>
    <property type="project" value="InterPro"/>
</dbReference>
<dbReference type="GO" id="GO:0004674">
    <property type="term" value="F:protein serine/threonine kinase activity"/>
    <property type="evidence" value="ECO:0000318"/>
    <property type="project" value="GO_Central"/>
</dbReference>
<dbReference type="GO" id="GO:0007165">
    <property type="term" value="P:signal transduction"/>
    <property type="evidence" value="ECO:0000318"/>
    <property type="project" value="GO_Central"/>
</dbReference>
<dbReference type="FunFam" id="1.10.510.10:FF:000883">
    <property type="entry name" value="Tau TuBulin Kinase"/>
    <property type="match status" value="1"/>
</dbReference>
<dbReference type="Gene3D" id="1.10.510.10">
    <property type="entry name" value="Transferase(Phosphotransferase) domain 1"/>
    <property type="match status" value="1"/>
</dbReference>
<dbReference type="InterPro" id="IPR050235">
    <property type="entry name" value="CK1_Ser-Thr_kinase"/>
</dbReference>
<dbReference type="InterPro" id="IPR011009">
    <property type="entry name" value="Kinase-like_dom_sf"/>
</dbReference>
<dbReference type="InterPro" id="IPR000719">
    <property type="entry name" value="Prot_kinase_dom"/>
</dbReference>
<dbReference type="PANTHER" id="PTHR11909">
    <property type="entry name" value="CASEIN KINASE-RELATED"/>
    <property type="match status" value="1"/>
</dbReference>
<dbReference type="Pfam" id="PF00069">
    <property type="entry name" value="Pkinase"/>
    <property type="match status" value="1"/>
</dbReference>
<dbReference type="SMART" id="SM00220">
    <property type="entry name" value="S_TKc"/>
    <property type="match status" value="1"/>
</dbReference>
<dbReference type="SUPFAM" id="SSF56112">
    <property type="entry name" value="Protein kinase-like (PK-like)"/>
    <property type="match status" value="1"/>
</dbReference>
<dbReference type="PROSITE" id="PS50011">
    <property type="entry name" value="PROTEIN_KINASE_DOM"/>
    <property type="match status" value="1"/>
</dbReference>
<protein>
    <recommendedName>
        <fullName evidence="3">Inactive tau-tubulin kinase ttbk-6</fullName>
    </recommendedName>
</protein>